<comment type="function">
    <text evidence="1">Could possibly oxidize fatty acids using specific components.</text>
</comment>
<comment type="catalytic activity">
    <reaction>
        <text>a (3S)-3-hydroxyacyl-CoA = a (2E)-enoyl-CoA + H2O</text>
        <dbReference type="Rhea" id="RHEA:16105"/>
        <dbReference type="ChEBI" id="CHEBI:15377"/>
        <dbReference type="ChEBI" id="CHEBI:57318"/>
        <dbReference type="ChEBI" id="CHEBI:58856"/>
        <dbReference type="EC" id="4.2.1.17"/>
    </reaction>
</comment>
<comment type="catalytic activity">
    <reaction>
        <text>a 4-saturated-(3S)-3-hydroxyacyl-CoA = a (3E)-enoyl-CoA + H2O</text>
        <dbReference type="Rhea" id="RHEA:20724"/>
        <dbReference type="ChEBI" id="CHEBI:15377"/>
        <dbReference type="ChEBI" id="CHEBI:58521"/>
        <dbReference type="ChEBI" id="CHEBI:137480"/>
        <dbReference type="EC" id="4.2.1.17"/>
    </reaction>
</comment>
<comment type="similarity">
    <text evidence="2">Belongs to the enoyl-CoA hydratase/isomerase family.</text>
</comment>
<proteinExistence type="inferred from homology"/>
<feature type="chain" id="PRO_0000109337" description="Probable enoyl-CoA hydratase echA8">
    <location>
        <begin position="1"/>
        <end position="257"/>
    </location>
</feature>
<name>ECHA8_MYCLE</name>
<evidence type="ECO:0000250" key="1"/>
<evidence type="ECO:0000305" key="2"/>
<organism>
    <name type="scientific">Mycobacterium leprae (strain TN)</name>
    <dbReference type="NCBI Taxonomy" id="272631"/>
    <lineage>
        <taxon>Bacteria</taxon>
        <taxon>Bacillati</taxon>
        <taxon>Actinomycetota</taxon>
        <taxon>Actinomycetes</taxon>
        <taxon>Mycobacteriales</taxon>
        <taxon>Mycobacteriaceae</taxon>
        <taxon>Mycobacterium</taxon>
    </lineage>
</organism>
<sequence length="257" mass="27517">MKYDTILVDGYQRVGIITLNRPQALNALNSQMMNEITNAAKELDIDPDVGAILITGSPKVFAAGADIKEMASLTFTDAFDADFFSAWGKLAAVRTPMIAAVAGYALGGGCELAMMCDLLIAADTAKFGQPEIKLGVLPGMGGSQRLTRAIGKAKAMDLILTGRTIDAAEAERSGLVSRVVLADDLLPEAKAVATTISQMSRSATRMAKEAVNRSFESTLAEGLLHERRLFHSTFVTDDQSEGMAAFIEKRAPQFTHR</sequence>
<gene>
    <name type="primary">echA8</name>
    <name type="ordered locus">ML2402</name>
    <name type="ORF">MLCB1306.05c</name>
</gene>
<keyword id="KW-0276">Fatty acid metabolism</keyword>
<keyword id="KW-0443">Lipid metabolism</keyword>
<keyword id="KW-0456">Lyase</keyword>
<keyword id="KW-1185">Reference proteome</keyword>
<accession>O07137</accession>
<dbReference type="EC" id="4.2.1.17"/>
<dbReference type="EMBL" id="Y13803">
    <property type="protein sequence ID" value="CAA74130.1"/>
    <property type="molecule type" value="Genomic_DNA"/>
</dbReference>
<dbReference type="EMBL" id="AL583925">
    <property type="protein sequence ID" value="CAC31918.1"/>
    <property type="molecule type" value="Genomic_DNA"/>
</dbReference>
<dbReference type="PIR" id="F87209">
    <property type="entry name" value="F87209"/>
</dbReference>
<dbReference type="RefSeq" id="NP_302555.1">
    <property type="nucleotide sequence ID" value="NC_002677.1"/>
</dbReference>
<dbReference type="RefSeq" id="WP_010908875.1">
    <property type="nucleotide sequence ID" value="NC_002677.1"/>
</dbReference>
<dbReference type="SMR" id="O07137"/>
<dbReference type="STRING" id="272631.gene:17576264"/>
<dbReference type="KEGG" id="mle:ML2402"/>
<dbReference type="PATRIC" id="fig|272631.5.peg.4621"/>
<dbReference type="Leproma" id="ML2402"/>
<dbReference type="eggNOG" id="COG1024">
    <property type="taxonomic scope" value="Bacteria"/>
</dbReference>
<dbReference type="HOGENOM" id="CLU_009834_7_6_11"/>
<dbReference type="OrthoDB" id="8452484at2"/>
<dbReference type="Proteomes" id="UP000000806">
    <property type="component" value="Chromosome"/>
</dbReference>
<dbReference type="GO" id="GO:0004300">
    <property type="term" value="F:enoyl-CoA hydratase activity"/>
    <property type="evidence" value="ECO:0007669"/>
    <property type="project" value="UniProtKB-EC"/>
</dbReference>
<dbReference type="GO" id="GO:0006635">
    <property type="term" value="P:fatty acid beta-oxidation"/>
    <property type="evidence" value="ECO:0007669"/>
    <property type="project" value="TreeGrafter"/>
</dbReference>
<dbReference type="CDD" id="cd06558">
    <property type="entry name" value="crotonase-like"/>
    <property type="match status" value="1"/>
</dbReference>
<dbReference type="FunFam" id="3.90.226.10:FF:000019">
    <property type="entry name" value="Enoyl-CoA hydratase, mitochondrial"/>
    <property type="match status" value="1"/>
</dbReference>
<dbReference type="FunFam" id="1.10.12.10:FF:000001">
    <property type="entry name" value="Probable enoyl-CoA hydratase, mitochondrial"/>
    <property type="match status" value="1"/>
</dbReference>
<dbReference type="Gene3D" id="3.90.226.10">
    <property type="entry name" value="2-enoyl-CoA Hydratase, Chain A, domain 1"/>
    <property type="match status" value="1"/>
</dbReference>
<dbReference type="Gene3D" id="1.10.12.10">
    <property type="entry name" value="Lyase 2-enoyl-coa Hydratase, Chain A, domain 2"/>
    <property type="match status" value="1"/>
</dbReference>
<dbReference type="InterPro" id="IPR029045">
    <property type="entry name" value="ClpP/crotonase-like_dom_sf"/>
</dbReference>
<dbReference type="InterPro" id="IPR018376">
    <property type="entry name" value="Enoyl-CoA_hyd/isom_CS"/>
</dbReference>
<dbReference type="InterPro" id="IPR001753">
    <property type="entry name" value="Enoyl-CoA_hydra/iso"/>
</dbReference>
<dbReference type="InterPro" id="IPR014748">
    <property type="entry name" value="Enoyl-CoA_hydra_C"/>
</dbReference>
<dbReference type="NCBIfam" id="NF004517">
    <property type="entry name" value="PRK05862.1"/>
    <property type="match status" value="1"/>
</dbReference>
<dbReference type="PANTHER" id="PTHR11941:SF54">
    <property type="entry name" value="ENOYL-COA HYDRATASE, MITOCHONDRIAL"/>
    <property type="match status" value="1"/>
</dbReference>
<dbReference type="PANTHER" id="PTHR11941">
    <property type="entry name" value="ENOYL-COA HYDRATASE-RELATED"/>
    <property type="match status" value="1"/>
</dbReference>
<dbReference type="Pfam" id="PF00378">
    <property type="entry name" value="ECH_1"/>
    <property type="match status" value="1"/>
</dbReference>
<dbReference type="SUPFAM" id="SSF52096">
    <property type="entry name" value="ClpP/crotonase"/>
    <property type="match status" value="1"/>
</dbReference>
<dbReference type="PROSITE" id="PS00166">
    <property type="entry name" value="ENOYL_COA_HYDRATASE"/>
    <property type="match status" value="1"/>
</dbReference>
<reference key="1">
    <citation type="journal article" date="2001" name="Nature">
        <title>Massive gene decay in the leprosy bacillus.</title>
        <authorList>
            <person name="Cole S.T."/>
            <person name="Eiglmeier K."/>
            <person name="Parkhill J."/>
            <person name="James K.D."/>
            <person name="Thomson N.R."/>
            <person name="Wheeler P.R."/>
            <person name="Honore N."/>
            <person name="Garnier T."/>
            <person name="Churcher C.M."/>
            <person name="Harris D.E."/>
            <person name="Mungall K.L."/>
            <person name="Basham D."/>
            <person name="Brown D."/>
            <person name="Chillingworth T."/>
            <person name="Connor R."/>
            <person name="Davies R.M."/>
            <person name="Devlin K."/>
            <person name="Duthoy S."/>
            <person name="Feltwell T."/>
            <person name="Fraser A."/>
            <person name="Hamlin N."/>
            <person name="Holroyd S."/>
            <person name="Hornsby T."/>
            <person name="Jagels K."/>
            <person name="Lacroix C."/>
            <person name="Maclean J."/>
            <person name="Moule S."/>
            <person name="Murphy L.D."/>
            <person name="Oliver K."/>
            <person name="Quail M.A."/>
            <person name="Rajandream M.A."/>
            <person name="Rutherford K.M."/>
            <person name="Rutter S."/>
            <person name="Seeger K."/>
            <person name="Simon S."/>
            <person name="Simmonds M."/>
            <person name="Skelton J."/>
            <person name="Squares R."/>
            <person name="Squares S."/>
            <person name="Stevens K."/>
            <person name="Taylor K."/>
            <person name="Whitehead S."/>
            <person name="Woodward J.R."/>
            <person name="Barrell B.G."/>
        </authorList>
    </citation>
    <scope>NUCLEOTIDE SEQUENCE [LARGE SCALE GENOMIC DNA]</scope>
    <source>
        <strain>TN</strain>
    </source>
</reference>
<protein>
    <recommendedName>
        <fullName>Probable enoyl-CoA hydratase echA8</fullName>
        <ecNumber>4.2.1.17</ecNumber>
    </recommendedName>
</protein>